<sequence>MALWGGRFTQAADKRFKDFNDSLRFDYRLAEQDIEGSIGWSKALVSVGVLTVQEQQQLESALNTLLIEVRSNPQAILQDDAEDIHSWVESKLIDKVGNLGKKLHTGRSRNDQVALDIKMWCKQRVIELQSSLHALQCKLVETAENNQHAVMPGYTHLQRAQPITFAHWCMAYVEMLDRDYSRLTDAYQRMNSCPLGSGALAGTAYAIDREQLALDLGFDVATRNSLDSVSDRDHIVELLSTASLSMAHLSRFAEDMIIFNSGESNFVELSDRVTSGSSLMPQKKNPDACELIRGKAGRVMGALTGMLMTLKGLPLAYNKDMQEDKEGIFDALDTWQDCIDMAALVLDGIQVNVERTKEAALKGYSNATELADYLVAKGVPFRDSHHIVGETVVYAIQQHKALEALSVAEFKQFSDVVEEDVYQILSLQSCLDKRCAKGGVSPLRVAEAIAEAKARLS</sequence>
<proteinExistence type="inferred from homology"/>
<keyword id="KW-0028">Amino-acid biosynthesis</keyword>
<keyword id="KW-0055">Arginine biosynthesis</keyword>
<keyword id="KW-0963">Cytoplasm</keyword>
<keyword id="KW-0456">Lyase</keyword>
<keyword id="KW-1185">Reference proteome</keyword>
<evidence type="ECO:0000255" key="1">
    <source>
        <dbReference type="HAMAP-Rule" id="MF_00006"/>
    </source>
</evidence>
<protein>
    <recommendedName>
        <fullName evidence="1">Argininosuccinate lyase</fullName>
        <shortName evidence="1">ASAL</shortName>
        <ecNumber evidence="1">4.3.2.1</ecNumber>
    </recommendedName>
    <alternativeName>
        <fullName evidence="1">Arginosuccinase</fullName>
    </alternativeName>
</protein>
<reference key="1">
    <citation type="journal article" date="2001" name="Proc. Natl. Acad. Sci. U.S.A.">
        <title>Complete genomic sequence of Pasteurella multocida Pm70.</title>
        <authorList>
            <person name="May B.J."/>
            <person name="Zhang Q."/>
            <person name="Li L.L."/>
            <person name="Paustian M.L."/>
            <person name="Whittam T.S."/>
            <person name="Kapur V."/>
        </authorList>
    </citation>
    <scope>NUCLEOTIDE SEQUENCE [LARGE SCALE GENOMIC DNA]</scope>
    <source>
        <strain>Pm70</strain>
    </source>
</reference>
<dbReference type="EC" id="4.3.2.1" evidence="1"/>
<dbReference type="EMBL" id="AE004439">
    <property type="protein sequence ID" value="AAK03204.1"/>
    <property type="molecule type" value="Genomic_DNA"/>
</dbReference>
<dbReference type="RefSeq" id="WP_005751835.1">
    <property type="nucleotide sequence ID" value="NC_002663.1"/>
</dbReference>
<dbReference type="SMR" id="P57909"/>
<dbReference type="STRING" id="272843.PM1120"/>
<dbReference type="EnsemblBacteria" id="AAK03204">
    <property type="protein sequence ID" value="AAK03204"/>
    <property type="gene ID" value="PM1120"/>
</dbReference>
<dbReference type="GeneID" id="77206442"/>
<dbReference type="KEGG" id="pmu:PM1120"/>
<dbReference type="PATRIC" id="fig|272843.6.peg.1133"/>
<dbReference type="HOGENOM" id="CLU_027272_2_3_6"/>
<dbReference type="OrthoDB" id="9769623at2"/>
<dbReference type="UniPathway" id="UPA00068">
    <property type="reaction ID" value="UER00114"/>
</dbReference>
<dbReference type="Proteomes" id="UP000000809">
    <property type="component" value="Chromosome"/>
</dbReference>
<dbReference type="GO" id="GO:0005829">
    <property type="term" value="C:cytosol"/>
    <property type="evidence" value="ECO:0007669"/>
    <property type="project" value="TreeGrafter"/>
</dbReference>
<dbReference type="GO" id="GO:0004056">
    <property type="term" value="F:argininosuccinate lyase activity"/>
    <property type="evidence" value="ECO:0007669"/>
    <property type="project" value="UniProtKB-UniRule"/>
</dbReference>
<dbReference type="GO" id="GO:0042450">
    <property type="term" value="P:arginine biosynthetic process via ornithine"/>
    <property type="evidence" value="ECO:0007669"/>
    <property type="project" value="InterPro"/>
</dbReference>
<dbReference type="GO" id="GO:0006526">
    <property type="term" value="P:L-arginine biosynthetic process"/>
    <property type="evidence" value="ECO:0007669"/>
    <property type="project" value="UniProtKB-UniRule"/>
</dbReference>
<dbReference type="CDD" id="cd01359">
    <property type="entry name" value="Argininosuccinate_lyase"/>
    <property type="match status" value="1"/>
</dbReference>
<dbReference type="FunFam" id="1.10.40.30:FF:000001">
    <property type="entry name" value="Argininosuccinate lyase"/>
    <property type="match status" value="1"/>
</dbReference>
<dbReference type="FunFam" id="1.20.200.10:FF:000006">
    <property type="entry name" value="Argininosuccinate lyase"/>
    <property type="match status" value="1"/>
</dbReference>
<dbReference type="Gene3D" id="1.10.40.30">
    <property type="entry name" value="Fumarase/aspartase (C-terminal domain)"/>
    <property type="match status" value="1"/>
</dbReference>
<dbReference type="Gene3D" id="1.20.200.10">
    <property type="entry name" value="Fumarase/aspartase (Central domain)"/>
    <property type="match status" value="1"/>
</dbReference>
<dbReference type="Gene3D" id="1.10.275.10">
    <property type="entry name" value="Fumarase/aspartase (N-terminal domain)"/>
    <property type="match status" value="1"/>
</dbReference>
<dbReference type="HAMAP" id="MF_00006">
    <property type="entry name" value="Arg_succ_lyase"/>
    <property type="match status" value="1"/>
</dbReference>
<dbReference type="InterPro" id="IPR029419">
    <property type="entry name" value="Arg_succ_lyase_C"/>
</dbReference>
<dbReference type="InterPro" id="IPR009049">
    <property type="entry name" value="Argininosuccinate_lyase"/>
</dbReference>
<dbReference type="InterPro" id="IPR024083">
    <property type="entry name" value="Fumarase/histidase_N"/>
</dbReference>
<dbReference type="InterPro" id="IPR020557">
    <property type="entry name" value="Fumarate_lyase_CS"/>
</dbReference>
<dbReference type="InterPro" id="IPR000362">
    <property type="entry name" value="Fumarate_lyase_fam"/>
</dbReference>
<dbReference type="InterPro" id="IPR022761">
    <property type="entry name" value="Fumarate_lyase_N"/>
</dbReference>
<dbReference type="InterPro" id="IPR008948">
    <property type="entry name" value="L-Aspartase-like"/>
</dbReference>
<dbReference type="NCBIfam" id="TIGR00838">
    <property type="entry name" value="argH"/>
    <property type="match status" value="1"/>
</dbReference>
<dbReference type="NCBIfam" id="NF008964">
    <property type="entry name" value="PRK12308.1"/>
    <property type="match status" value="1"/>
</dbReference>
<dbReference type="PANTHER" id="PTHR43814">
    <property type="entry name" value="ARGININOSUCCINATE LYASE"/>
    <property type="match status" value="1"/>
</dbReference>
<dbReference type="PANTHER" id="PTHR43814:SF1">
    <property type="entry name" value="ARGININOSUCCINATE LYASE"/>
    <property type="match status" value="1"/>
</dbReference>
<dbReference type="Pfam" id="PF14698">
    <property type="entry name" value="ASL_C2"/>
    <property type="match status" value="1"/>
</dbReference>
<dbReference type="Pfam" id="PF00206">
    <property type="entry name" value="Lyase_1"/>
    <property type="match status" value="1"/>
</dbReference>
<dbReference type="PRINTS" id="PR00145">
    <property type="entry name" value="ARGSUCLYASE"/>
</dbReference>
<dbReference type="PRINTS" id="PR00149">
    <property type="entry name" value="FUMRATELYASE"/>
</dbReference>
<dbReference type="SUPFAM" id="SSF48557">
    <property type="entry name" value="L-aspartase-like"/>
    <property type="match status" value="1"/>
</dbReference>
<dbReference type="PROSITE" id="PS00163">
    <property type="entry name" value="FUMARATE_LYASES"/>
    <property type="match status" value="1"/>
</dbReference>
<feature type="chain" id="PRO_0000137800" description="Argininosuccinate lyase">
    <location>
        <begin position="1"/>
        <end position="457"/>
    </location>
</feature>
<organism>
    <name type="scientific">Pasteurella multocida (strain Pm70)</name>
    <dbReference type="NCBI Taxonomy" id="272843"/>
    <lineage>
        <taxon>Bacteria</taxon>
        <taxon>Pseudomonadati</taxon>
        <taxon>Pseudomonadota</taxon>
        <taxon>Gammaproteobacteria</taxon>
        <taxon>Pasteurellales</taxon>
        <taxon>Pasteurellaceae</taxon>
        <taxon>Pasteurella</taxon>
    </lineage>
</organism>
<name>ARLY_PASMU</name>
<comment type="catalytic activity">
    <reaction evidence="1">
        <text>2-(N(omega)-L-arginino)succinate = fumarate + L-arginine</text>
        <dbReference type="Rhea" id="RHEA:24020"/>
        <dbReference type="ChEBI" id="CHEBI:29806"/>
        <dbReference type="ChEBI" id="CHEBI:32682"/>
        <dbReference type="ChEBI" id="CHEBI:57472"/>
        <dbReference type="EC" id="4.3.2.1"/>
    </reaction>
</comment>
<comment type="pathway">
    <text evidence="1">Amino-acid biosynthesis; L-arginine biosynthesis; L-arginine from L-ornithine and carbamoyl phosphate: step 3/3.</text>
</comment>
<comment type="subcellular location">
    <subcellularLocation>
        <location evidence="1">Cytoplasm</location>
    </subcellularLocation>
</comment>
<comment type="similarity">
    <text evidence="1">Belongs to the lyase 1 family. Argininosuccinate lyase subfamily.</text>
</comment>
<accession>P57909</accession>
<gene>
    <name evidence="1" type="primary">argH</name>
    <name type="ordered locus">PM1120</name>
</gene>